<organism>
    <name type="scientific">Salmonella newport (strain SL254)</name>
    <dbReference type="NCBI Taxonomy" id="423368"/>
    <lineage>
        <taxon>Bacteria</taxon>
        <taxon>Pseudomonadati</taxon>
        <taxon>Pseudomonadota</taxon>
        <taxon>Gammaproteobacteria</taxon>
        <taxon>Enterobacterales</taxon>
        <taxon>Enterobacteriaceae</taxon>
        <taxon>Salmonella</taxon>
    </lineage>
</organism>
<reference key="1">
    <citation type="journal article" date="2011" name="J. Bacteriol.">
        <title>Comparative genomics of 28 Salmonella enterica isolates: evidence for CRISPR-mediated adaptive sublineage evolution.</title>
        <authorList>
            <person name="Fricke W.F."/>
            <person name="Mammel M.K."/>
            <person name="McDermott P.F."/>
            <person name="Tartera C."/>
            <person name="White D.G."/>
            <person name="Leclerc J.E."/>
            <person name="Ravel J."/>
            <person name="Cebula T.A."/>
        </authorList>
    </citation>
    <scope>NUCLEOTIDE SEQUENCE [LARGE SCALE GENOMIC DNA]</scope>
    <source>
        <strain>SL254</strain>
    </source>
</reference>
<evidence type="ECO:0000255" key="1">
    <source>
        <dbReference type="HAMAP-Rule" id="MF_01114"/>
    </source>
</evidence>
<sequence>MSEPTSSRPAYARLLDRAVRILAVRDHSEQELRRKLSAPVMGKNGPEEIDATADDYERVIAWCHEHHYLDDERFVMRFIASRSRKGYGPARIRQELNQKGISRESTEKTMRECEIDWSEMAREQAVRKYGEPLPSNFSEKVKVQRFLLYRGYLMDDIQQIWRNFAD</sequence>
<comment type="function">
    <text evidence="1">Modulates RecA activity.</text>
</comment>
<comment type="subcellular location">
    <subcellularLocation>
        <location evidence="1">Cytoplasm</location>
    </subcellularLocation>
</comment>
<comment type="similarity">
    <text evidence="1">Belongs to the RecX family.</text>
</comment>
<gene>
    <name evidence="1" type="primary">recX</name>
    <name type="ordered locus">SNSL254_A3030</name>
</gene>
<feature type="chain" id="PRO_1000137191" description="Regulatory protein RecX">
    <location>
        <begin position="1"/>
        <end position="166"/>
    </location>
</feature>
<dbReference type="EMBL" id="CP001113">
    <property type="protein sequence ID" value="ACF63678.1"/>
    <property type="molecule type" value="Genomic_DNA"/>
</dbReference>
<dbReference type="RefSeq" id="WP_001294870.1">
    <property type="nucleotide sequence ID" value="NZ_CCMR01000001.1"/>
</dbReference>
<dbReference type="SMR" id="B4T399"/>
<dbReference type="KEGG" id="see:SNSL254_A3030"/>
<dbReference type="HOGENOM" id="CLU_066607_3_2_6"/>
<dbReference type="Proteomes" id="UP000008824">
    <property type="component" value="Chromosome"/>
</dbReference>
<dbReference type="GO" id="GO:0005737">
    <property type="term" value="C:cytoplasm"/>
    <property type="evidence" value="ECO:0007669"/>
    <property type="project" value="UniProtKB-SubCell"/>
</dbReference>
<dbReference type="GO" id="GO:0006282">
    <property type="term" value="P:regulation of DNA repair"/>
    <property type="evidence" value="ECO:0007669"/>
    <property type="project" value="UniProtKB-UniRule"/>
</dbReference>
<dbReference type="FunFam" id="1.10.10.10:FF:000133">
    <property type="entry name" value="Regulatory protein RecX"/>
    <property type="match status" value="1"/>
</dbReference>
<dbReference type="FunFam" id="1.10.10.10:FF:000134">
    <property type="entry name" value="Regulatory protein RecX"/>
    <property type="match status" value="1"/>
</dbReference>
<dbReference type="Gene3D" id="1.10.10.10">
    <property type="entry name" value="Winged helix-like DNA-binding domain superfamily/Winged helix DNA-binding domain"/>
    <property type="match status" value="3"/>
</dbReference>
<dbReference type="HAMAP" id="MF_01114">
    <property type="entry name" value="RecX"/>
    <property type="match status" value="1"/>
</dbReference>
<dbReference type="InterPro" id="IPR053926">
    <property type="entry name" value="RecX_HTH_1st"/>
</dbReference>
<dbReference type="InterPro" id="IPR053924">
    <property type="entry name" value="RecX_HTH_2nd"/>
</dbReference>
<dbReference type="InterPro" id="IPR053925">
    <property type="entry name" value="RecX_HTH_3rd"/>
</dbReference>
<dbReference type="InterPro" id="IPR003783">
    <property type="entry name" value="Regulatory_RecX"/>
</dbReference>
<dbReference type="InterPro" id="IPR036388">
    <property type="entry name" value="WH-like_DNA-bd_sf"/>
</dbReference>
<dbReference type="NCBIfam" id="NF001052">
    <property type="entry name" value="PRK00117.1-1"/>
    <property type="match status" value="1"/>
</dbReference>
<dbReference type="PANTHER" id="PTHR33602">
    <property type="entry name" value="REGULATORY PROTEIN RECX FAMILY PROTEIN"/>
    <property type="match status" value="1"/>
</dbReference>
<dbReference type="PANTHER" id="PTHR33602:SF1">
    <property type="entry name" value="REGULATORY PROTEIN RECX FAMILY PROTEIN"/>
    <property type="match status" value="1"/>
</dbReference>
<dbReference type="Pfam" id="PF21982">
    <property type="entry name" value="RecX_HTH1"/>
    <property type="match status" value="1"/>
</dbReference>
<dbReference type="Pfam" id="PF02631">
    <property type="entry name" value="RecX_HTH2"/>
    <property type="match status" value="1"/>
</dbReference>
<dbReference type="Pfam" id="PF21981">
    <property type="entry name" value="RecX_HTH3"/>
    <property type="match status" value="1"/>
</dbReference>
<proteinExistence type="inferred from homology"/>
<keyword id="KW-0963">Cytoplasm</keyword>
<name>RECX_SALNS</name>
<accession>B4T399</accession>
<protein>
    <recommendedName>
        <fullName evidence="1">Regulatory protein RecX</fullName>
    </recommendedName>
</protein>